<accession>Q3IHD7</accession>
<sequence length="56" mass="6264">MAVQKSKKSRARRGMRRSHDAISGPSLTVDQTSGETHRRHHVTADGYYKGVQVISK</sequence>
<reference key="1">
    <citation type="journal article" date="2005" name="Genome Res.">
        <title>Coping with cold: the genome of the versatile marine Antarctica bacterium Pseudoalteromonas haloplanktis TAC125.</title>
        <authorList>
            <person name="Medigue C."/>
            <person name="Krin E."/>
            <person name="Pascal G."/>
            <person name="Barbe V."/>
            <person name="Bernsel A."/>
            <person name="Bertin P.N."/>
            <person name="Cheung F."/>
            <person name="Cruveiller S."/>
            <person name="D'Amico S."/>
            <person name="Duilio A."/>
            <person name="Fang G."/>
            <person name="Feller G."/>
            <person name="Ho C."/>
            <person name="Mangenot S."/>
            <person name="Marino G."/>
            <person name="Nilsson J."/>
            <person name="Parrilli E."/>
            <person name="Rocha E.P.C."/>
            <person name="Rouy Z."/>
            <person name="Sekowska A."/>
            <person name="Tutino M.L."/>
            <person name="Vallenet D."/>
            <person name="von Heijne G."/>
            <person name="Danchin A."/>
        </authorList>
    </citation>
    <scope>NUCLEOTIDE SEQUENCE [LARGE SCALE GENOMIC DNA]</scope>
    <source>
        <strain>TAC 125</strain>
    </source>
</reference>
<proteinExistence type="inferred from homology"/>
<keyword id="KW-1185">Reference proteome</keyword>
<keyword id="KW-0687">Ribonucleoprotein</keyword>
<keyword id="KW-0689">Ribosomal protein</keyword>
<dbReference type="EMBL" id="CR954246">
    <property type="protein sequence ID" value="CAI86883.1"/>
    <property type="molecule type" value="Genomic_DNA"/>
</dbReference>
<dbReference type="SMR" id="Q3IHD7"/>
<dbReference type="STRING" id="326442.PSHAa1811"/>
<dbReference type="KEGG" id="pha:PSHAa1811"/>
<dbReference type="eggNOG" id="COG0333">
    <property type="taxonomic scope" value="Bacteria"/>
</dbReference>
<dbReference type="HOGENOM" id="CLU_129084_2_1_6"/>
<dbReference type="BioCyc" id="PHAL326442:PSHA_RS08880-MONOMER"/>
<dbReference type="Proteomes" id="UP000006843">
    <property type="component" value="Chromosome I"/>
</dbReference>
<dbReference type="GO" id="GO:0015934">
    <property type="term" value="C:large ribosomal subunit"/>
    <property type="evidence" value="ECO:0007669"/>
    <property type="project" value="InterPro"/>
</dbReference>
<dbReference type="GO" id="GO:0003735">
    <property type="term" value="F:structural constituent of ribosome"/>
    <property type="evidence" value="ECO:0007669"/>
    <property type="project" value="InterPro"/>
</dbReference>
<dbReference type="GO" id="GO:0006412">
    <property type="term" value="P:translation"/>
    <property type="evidence" value="ECO:0007669"/>
    <property type="project" value="UniProtKB-UniRule"/>
</dbReference>
<dbReference type="HAMAP" id="MF_00340">
    <property type="entry name" value="Ribosomal_bL32"/>
    <property type="match status" value="1"/>
</dbReference>
<dbReference type="InterPro" id="IPR002677">
    <property type="entry name" value="Ribosomal_bL32"/>
</dbReference>
<dbReference type="InterPro" id="IPR044957">
    <property type="entry name" value="Ribosomal_bL32_bact"/>
</dbReference>
<dbReference type="InterPro" id="IPR011332">
    <property type="entry name" value="Ribosomal_zn-bd"/>
</dbReference>
<dbReference type="NCBIfam" id="TIGR01031">
    <property type="entry name" value="rpmF_bact"/>
    <property type="match status" value="1"/>
</dbReference>
<dbReference type="PANTHER" id="PTHR35534">
    <property type="entry name" value="50S RIBOSOMAL PROTEIN L32"/>
    <property type="match status" value="1"/>
</dbReference>
<dbReference type="PANTHER" id="PTHR35534:SF1">
    <property type="entry name" value="LARGE RIBOSOMAL SUBUNIT PROTEIN BL32"/>
    <property type="match status" value="1"/>
</dbReference>
<dbReference type="Pfam" id="PF01783">
    <property type="entry name" value="Ribosomal_L32p"/>
    <property type="match status" value="1"/>
</dbReference>
<dbReference type="SUPFAM" id="SSF57829">
    <property type="entry name" value="Zn-binding ribosomal proteins"/>
    <property type="match status" value="1"/>
</dbReference>
<organism>
    <name type="scientific">Pseudoalteromonas translucida (strain TAC 125)</name>
    <dbReference type="NCBI Taxonomy" id="326442"/>
    <lineage>
        <taxon>Bacteria</taxon>
        <taxon>Pseudomonadati</taxon>
        <taxon>Pseudomonadota</taxon>
        <taxon>Gammaproteobacteria</taxon>
        <taxon>Alteromonadales</taxon>
        <taxon>Pseudoalteromonadaceae</taxon>
        <taxon>Pseudoalteromonas</taxon>
    </lineage>
</organism>
<feature type="chain" id="PRO_0000225750" description="Large ribosomal subunit protein bL32">
    <location>
        <begin position="1"/>
        <end position="56"/>
    </location>
</feature>
<feature type="region of interest" description="Disordered" evidence="2">
    <location>
        <begin position="1"/>
        <end position="56"/>
    </location>
</feature>
<feature type="compositionally biased region" description="Basic residues" evidence="2">
    <location>
        <begin position="1"/>
        <end position="16"/>
    </location>
</feature>
<feature type="compositionally biased region" description="Polar residues" evidence="2">
    <location>
        <begin position="25"/>
        <end position="34"/>
    </location>
</feature>
<name>RL32_PSET1</name>
<comment type="similarity">
    <text evidence="1">Belongs to the bacterial ribosomal protein bL32 family.</text>
</comment>
<evidence type="ECO:0000255" key="1">
    <source>
        <dbReference type="HAMAP-Rule" id="MF_00340"/>
    </source>
</evidence>
<evidence type="ECO:0000256" key="2">
    <source>
        <dbReference type="SAM" id="MobiDB-lite"/>
    </source>
</evidence>
<evidence type="ECO:0000305" key="3"/>
<protein>
    <recommendedName>
        <fullName evidence="1">Large ribosomal subunit protein bL32</fullName>
    </recommendedName>
    <alternativeName>
        <fullName evidence="3">50S ribosomal protein L32</fullName>
    </alternativeName>
</protein>
<gene>
    <name evidence="1" type="primary">rpmF</name>
    <name type="ordered locus">PSHAa1811</name>
</gene>